<evidence type="ECO:0000250" key="1">
    <source>
        <dbReference type="UniProtKB" id="P47818"/>
    </source>
</evidence>
<evidence type="ECO:0000255" key="2"/>
<evidence type="ECO:0000256" key="3">
    <source>
        <dbReference type="SAM" id="MobiDB-lite"/>
    </source>
</evidence>
<evidence type="ECO:0000269" key="4">
    <source>
    </source>
</evidence>
<evidence type="ECO:0000303" key="5">
    <source>
    </source>
</evidence>
<evidence type="ECO:0000305" key="6"/>
<evidence type="ECO:0000305" key="7">
    <source>
    </source>
</evidence>
<sequence>MLGGRHSHWSPQDLEEQAFSPYGTFPPSPTESTETSSSISSTRPRVNPRIVSDAILGLSDGLTVPFALSAGLSALGNSRVVVVGGLAELVAGAISMGLGGYVGSRSEVESYEATVRETKHLVKASPMETMNIIHQVFAPYNLPEEPVARMSHILYNSPEKLLDFLLTFYHKESKPGCHQAWISAITLALGYFIGGFIPLIPYFMVDQVLVALYYSIGIMIFTLLVFGYVKTCVVRGWTGKENIVAGIKGGLQMVVVGGLAAGASIALARAINPTGGALF</sequence>
<organism>
    <name type="scientific">Arthroderma benhamiae (strain ATCC MYA-4681 / CBS 112371)</name>
    <name type="common">Trichophyton mentagrophytes</name>
    <dbReference type="NCBI Taxonomy" id="663331"/>
    <lineage>
        <taxon>Eukaryota</taxon>
        <taxon>Fungi</taxon>
        <taxon>Dikarya</taxon>
        <taxon>Ascomycota</taxon>
        <taxon>Pezizomycotina</taxon>
        <taxon>Eurotiomycetes</taxon>
        <taxon>Eurotiomycetidae</taxon>
        <taxon>Onygenales</taxon>
        <taxon>Arthrodermataceae</taxon>
        <taxon>Trichophyton</taxon>
    </lineage>
</organism>
<proteinExistence type="evidence at transcript level"/>
<keyword id="KW-0406">Ion transport</keyword>
<keyword id="KW-0408">Iron</keyword>
<keyword id="KW-0410">Iron transport</keyword>
<keyword id="KW-0472">Membrane</keyword>
<keyword id="KW-1185">Reference proteome</keyword>
<keyword id="KW-0812">Transmembrane</keyword>
<keyword id="KW-1133">Transmembrane helix</keyword>
<keyword id="KW-0813">Transport</keyword>
<keyword id="KW-0926">Vacuole</keyword>
<gene>
    <name evidence="5" type="primary">cccA</name>
    <name type="ORF">ARB_03795</name>
</gene>
<reference key="1">
    <citation type="journal article" date="2011" name="Genome Biol.">
        <title>Comparative and functional genomics provide insights into the pathogenicity of dermatophytic fungi.</title>
        <authorList>
            <person name="Burmester A."/>
            <person name="Shelest E."/>
            <person name="Gloeckner G."/>
            <person name="Heddergott C."/>
            <person name="Schindler S."/>
            <person name="Staib P."/>
            <person name="Heidel A."/>
            <person name="Felder M."/>
            <person name="Petzold A."/>
            <person name="Szafranski K."/>
            <person name="Feuermann M."/>
            <person name="Pedruzzi I."/>
            <person name="Priebe S."/>
            <person name="Groth M."/>
            <person name="Winkler R."/>
            <person name="Li W."/>
            <person name="Kniemeyer O."/>
            <person name="Schroeckh V."/>
            <person name="Hertweck C."/>
            <person name="Hube B."/>
            <person name="White T.C."/>
            <person name="Platzer M."/>
            <person name="Guthke R."/>
            <person name="Heitman J."/>
            <person name="Woestemeyer J."/>
            <person name="Zipfel P.F."/>
            <person name="Monod M."/>
            <person name="Brakhage A.A."/>
        </authorList>
    </citation>
    <scope>NUCLEOTIDE SEQUENCE [LARGE SCALE GENOMIC DNA]</scope>
    <source>
        <strain>ATCC MYA-4681 / CBS 112371</strain>
    </source>
</reference>
<reference key="2">
    <citation type="journal article" date="2016" name="PLoS ONE">
        <title>HapX mediates iron homeostasis in the pathogenic dermatophyte Arthroderma benhamiae but is dispensable for virulence.</title>
        <authorList>
            <person name="Kroeber A."/>
            <person name="Scherlach K."/>
            <person name="Hortschansky P."/>
            <person name="Shelest E."/>
            <person name="Staib P."/>
            <person name="Kniemeyer O."/>
            <person name="Brakhage A.A."/>
        </authorList>
    </citation>
    <scope>FUNCTION</scope>
    <scope>INDUCTION</scope>
</reference>
<dbReference type="EMBL" id="ABSU01000046">
    <property type="protein sequence ID" value="EFE29352.1"/>
    <property type="molecule type" value="Genomic_DNA"/>
</dbReference>
<dbReference type="RefSeq" id="XP_003009997.1">
    <property type="nucleotide sequence ID" value="XM_003009951.1"/>
</dbReference>
<dbReference type="SMR" id="D4B5N6"/>
<dbReference type="STRING" id="663331.D4B5N6"/>
<dbReference type="GeneID" id="9525344"/>
<dbReference type="KEGG" id="abe:ARB_03795"/>
<dbReference type="eggNOG" id="KOG4473">
    <property type="taxonomic scope" value="Eukaryota"/>
</dbReference>
<dbReference type="HOGENOM" id="CLU_038957_0_2_1"/>
<dbReference type="OMA" id="QMCCVGG"/>
<dbReference type="Proteomes" id="UP000008866">
    <property type="component" value="Unassembled WGS sequence"/>
</dbReference>
<dbReference type="GO" id="GO:0005774">
    <property type="term" value="C:vacuolar membrane"/>
    <property type="evidence" value="ECO:0007669"/>
    <property type="project" value="UniProtKB-SubCell"/>
</dbReference>
<dbReference type="GO" id="GO:0005384">
    <property type="term" value="F:manganese ion transmembrane transporter activity"/>
    <property type="evidence" value="ECO:0007669"/>
    <property type="project" value="InterPro"/>
</dbReference>
<dbReference type="GO" id="GO:0030026">
    <property type="term" value="P:intracellular manganese ion homeostasis"/>
    <property type="evidence" value="ECO:0007669"/>
    <property type="project" value="InterPro"/>
</dbReference>
<dbReference type="GO" id="GO:0006826">
    <property type="term" value="P:iron ion transport"/>
    <property type="evidence" value="ECO:0007669"/>
    <property type="project" value="UniProtKB-KW"/>
</dbReference>
<dbReference type="CDD" id="cd02435">
    <property type="entry name" value="CCC1"/>
    <property type="match status" value="1"/>
</dbReference>
<dbReference type="InterPro" id="IPR008217">
    <property type="entry name" value="Ccc1_fam"/>
</dbReference>
<dbReference type="PANTHER" id="PTHR31851">
    <property type="entry name" value="FE(2+)/MN(2+) TRANSPORTER PCL1"/>
    <property type="match status" value="1"/>
</dbReference>
<dbReference type="Pfam" id="PF01988">
    <property type="entry name" value="VIT1"/>
    <property type="match status" value="1"/>
</dbReference>
<accession>D4B5N6</accession>
<comment type="function">
    <text evidence="7">Vacuolar iron transporter involved in the transfer of iron from the cytosol to the vacuole for intracellular iron storage (PubMed:26960149). Plays an essential role in iron detoxification during high iron conditions (PubMed:26960149).</text>
</comment>
<comment type="catalytic activity">
    <reaction evidence="1">
        <text>Fe(2+)(in) = Fe(2+)(out)</text>
        <dbReference type="Rhea" id="RHEA:28486"/>
        <dbReference type="ChEBI" id="CHEBI:29033"/>
    </reaction>
    <physiologicalReaction direction="left-to-right" evidence="6">
        <dbReference type="Rhea" id="RHEA:28487"/>
    </physiologicalReaction>
</comment>
<comment type="subcellular location">
    <subcellularLocation>
        <location evidence="6">Vacuole membrane</location>
        <topology evidence="2">Multi-pass membrane protein</topology>
    </subcellularLocation>
</comment>
<comment type="induction">
    <text evidence="4">Expression is repressed in iron starvation conditions and induced in high iron conditions and is controlled by the hapX and sreA iron acquisition regulators (PubMed:26960149).</text>
</comment>
<comment type="similarity">
    <text evidence="6">Belongs to the CCC1 family.</text>
</comment>
<protein>
    <recommendedName>
        <fullName evidence="5">Vacuolar iron transporter cccA</fullName>
    </recommendedName>
</protein>
<name>CCCA_ARTBC</name>
<feature type="chain" id="PRO_0000444416" description="Vacuolar iron transporter cccA">
    <location>
        <begin position="1"/>
        <end position="279"/>
    </location>
</feature>
<feature type="transmembrane region" description="Helical" evidence="2">
    <location>
        <begin position="55"/>
        <end position="75"/>
    </location>
</feature>
<feature type="transmembrane region" description="Helical" evidence="2">
    <location>
        <begin position="80"/>
        <end position="100"/>
    </location>
</feature>
<feature type="transmembrane region" description="Helical" evidence="2">
    <location>
        <begin position="185"/>
        <end position="205"/>
    </location>
</feature>
<feature type="transmembrane region" description="Helical" evidence="2">
    <location>
        <begin position="208"/>
        <end position="228"/>
    </location>
</feature>
<feature type="transmembrane region" description="Helical" evidence="2">
    <location>
        <begin position="243"/>
        <end position="263"/>
    </location>
</feature>
<feature type="region of interest" description="Disordered" evidence="3">
    <location>
        <begin position="1"/>
        <end position="44"/>
    </location>
</feature>
<feature type="compositionally biased region" description="Low complexity" evidence="3">
    <location>
        <begin position="30"/>
        <end position="44"/>
    </location>
</feature>